<dbReference type="EMBL" id="AE008384">
    <property type="protein sequence ID" value="AAM30089.1"/>
    <property type="molecule type" value="Genomic_DNA"/>
</dbReference>
<dbReference type="RefSeq" id="WP_011024107.1">
    <property type="nucleotide sequence ID" value="NC_003901.1"/>
</dbReference>
<dbReference type="KEGG" id="mma:MM_0393"/>
<dbReference type="PATRIC" id="fig|192952.21.peg.475"/>
<dbReference type="eggNOG" id="arCOG03624">
    <property type="taxonomic scope" value="Archaea"/>
</dbReference>
<dbReference type="HOGENOM" id="CLU_106567_0_0_2"/>
<dbReference type="Proteomes" id="UP000000595">
    <property type="component" value="Chromosome"/>
</dbReference>
<dbReference type="InterPro" id="IPR008887">
    <property type="entry name" value="UPF0228"/>
</dbReference>
<dbReference type="Pfam" id="PF05727">
    <property type="entry name" value="UPF0228"/>
    <property type="match status" value="1"/>
</dbReference>
<reference key="1">
    <citation type="journal article" date="2002" name="J. Mol. Microbiol. Biotechnol.">
        <title>The genome of Methanosarcina mazei: evidence for lateral gene transfer between Bacteria and Archaea.</title>
        <authorList>
            <person name="Deppenmeier U."/>
            <person name="Johann A."/>
            <person name="Hartsch T."/>
            <person name="Merkl R."/>
            <person name="Schmitz R.A."/>
            <person name="Martinez-Arias R."/>
            <person name="Henne A."/>
            <person name="Wiezer A."/>
            <person name="Baeumer S."/>
            <person name="Jacobi C."/>
            <person name="Brueggemann H."/>
            <person name="Lienard T."/>
            <person name="Christmann A."/>
            <person name="Boemecke M."/>
            <person name="Steckel S."/>
            <person name="Bhattacharyya A."/>
            <person name="Lykidis A."/>
            <person name="Overbeek R."/>
            <person name="Klenk H.-P."/>
            <person name="Gunsalus R.P."/>
            <person name="Fritz H.-J."/>
            <person name="Gottschalk G."/>
        </authorList>
    </citation>
    <scope>NUCLEOTIDE SEQUENCE [LARGE SCALE GENOMIC DNA]</scope>
    <source>
        <strain>ATCC BAA-159 / DSM 3647 / Goe1 / Go1 / JCM 11833 / OCM 88</strain>
    </source>
</reference>
<proteinExistence type="inferred from homology"/>
<gene>
    <name type="ordered locus">MM_0393</name>
</gene>
<protein>
    <recommendedName>
        <fullName>UPF0228 protein MM_0393</fullName>
    </recommendedName>
</protein>
<feature type="chain" id="PRO_0000220402" description="UPF0228 protein MM_0393">
    <location>
        <begin position="1"/>
        <end position="178"/>
    </location>
</feature>
<comment type="similarity">
    <text evidence="1">Belongs to the UPF0228 family.</text>
</comment>
<sequence length="178" mass="20332">MNKISKVVVVFIALLTFLALMMQSQEVKTPGLLIQFENETSEAEVKAILENYDIPVNYTIDYNSNIGRGMYYIEVDEDKIYELRKDENWTSVVEIKKGNYNIIMLSEEFVPDENVLAMLEKNNLQLKKAVVCYIQFGDGSAPWVVGENCILERDAIRIKNELETNEKVLIVGLDDIVG</sequence>
<accession>P61936</accession>
<accession>Q8TID0</accession>
<organism>
    <name type="scientific">Methanosarcina mazei (strain ATCC BAA-159 / DSM 3647 / Goe1 / Go1 / JCM 11833 / OCM 88)</name>
    <name type="common">Methanosarcina frisia</name>
    <dbReference type="NCBI Taxonomy" id="192952"/>
    <lineage>
        <taxon>Archaea</taxon>
        <taxon>Methanobacteriati</taxon>
        <taxon>Methanobacteriota</taxon>
        <taxon>Stenosarchaea group</taxon>
        <taxon>Methanomicrobia</taxon>
        <taxon>Methanosarcinales</taxon>
        <taxon>Methanosarcinaceae</taxon>
        <taxon>Methanosarcina</taxon>
    </lineage>
</organism>
<name>Y393_METMA</name>
<evidence type="ECO:0000305" key="1"/>